<reference key="1">
    <citation type="journal article" date="2006" name="Proc. Natl. Acad. Sci. U.S.A.">
        <title>Comparative genomics of the lactic acid bacteria.</title>
        <authorList>
            <person name="Makarova K.S."/>
            <person name="Slesarev A."/>
            <person name="Wolf Y.I."/>
            <person name="Sorokin A."/>
            <person name="Mirkin B."/>
            <person name="Koonin E.V."/>
            <person name="Pavlov A."/>
            <person name="Pavlova N."/>
            <person name="Karamychev V."/>
            <person name="Polouchine N."/>
            <person name="Shakhova V."/>
            <person name="Grigoriev I."/>
            <person name="Lou Y."/>
            <person name="Rohksar D."/>
            <person name="Lucas S."/>
            <person name="Huang K."/>
            <person name="Goodstein D.M."/>
            <person name="Hawkins T."/>
            <person name="Plengvidhya V."/>
            <person name="Welker D."/>
            <person name="Hughes J."/>
            <person name="Goh Y."/>
            <person name="Benson A."/>
            <person name="Baldwin K."/>
            <person name="Lee J.-H."/>
            <person name="Diaz-Muniz I."/>
            <person name="Dosti B."/>
            <person name="Smeianov V."/>
            <person name="Wechter W."/>
            <person name="Barabote R."/>
            <person name="Lorca G."/>
            <person name="Altermann E."/>
            <person name="Barrangou R."/>
            <person name="Ganesan B."/>
            <person name="Xie Y."/>
            <person name="Rawsthorne H."/>
            <person name="Tamir D."/>
            <person name="Parker C."/>
            <person name="Breidt F."/>
            <person name="Broadbent J.R."/>
            <person name="Hutkins R."/>
            <person name="O'Sullivan D."/>
            <person name="Steele J."/>
            <person name="Unlu G."/>
            <person name="Saier M.H. Jr."/>
            <person name="Klaenhammer T."/>
            <person name="Richardson P."/>
            <person name="Kozyavkin S."/>
            <person name="Weimer B.C."/>
            <person name="Mills D.A."/>
        </authorList>
    </citation>
    <scope>NUCLEOTIDE SEQUENCE [LARGE SCALE GENOMIC DNA]</scope>
    <source>
        <strain>ATCC 33323 / DSM 20243 / BCRC 14619 / CIP 102991 / JCM 1131 / KCTC 3163 / NCIMB 11718 / NCTC 13722 / AM63</strain>
    </source>
</reference>
<gene>
    <name evidence="1" type="primary">rpsO</name>
    <name type="ordered locus">LGAS_1171</name>
</gene>
<comment type="function">
    <text evidence="1">One of the primary rRNA binding proteins, it binds directly to 16S rRNA where it helps nucleate assembly of the platform of the 30S subunit by binding and bridging several RNA helices of the 16S rRNA.</text>
</comment>
<comment type="function">
    <text evidence="1">Forms an intersubunit bridge (bridge B4) with the 23S rRNA of the 50S subunit in the ribosome.</text>
</comment>
<comment type="subunit">
    <text evidence="1">Part of the 30S ribosomal subunit. Forms a bridge to the 50S subunit in the 70S ribosome, contacting the 23S rRNA.</text>
</comment>
<comment type="similarity">
    <text evidence="1">Belongs to the universal ribosomal protein uS15 family.</text>
</comment>
<keyword id="KW-0687">Ribonucleoprotein</keyword>
<keyword id="KW-0689">Ribosomal protein</keyword>
<keyword id="KW-0694">RNA-binding</keyword>
<keyword id="KW-0699">rRNA-binding</keyword>
<protein>
    <recommendedName>
        <fullName evidence="1">Small ribosomal subunit protein uS15</fullName>
    </recommendedName>
    <alternativeName>
        <fullName evidence="2">30S ribosomal protein S15</fullName>
    </alternativeName>
</protein>
<organism>
    <name type="scientific">Lactobacillus gasseri (strain ATCC 33323 / DSM 20243 / BCRC 14619 / CIP 102991 / JCM 1131 / KCTC 3163 / NCIMB 11718 / NCTC 13722 / AM63)</name>
    <dbReference type="NCBI Taxonomy" id="324831"/>
    <lineage>
        <taxon>Bacteria</taxon>
        <taxon>Bacillati</taxon>
        <taxon>Bacillota</taxon>
        <taxon>Bacilli</taxon>
        <taxon>Lactobacillales</taxon>
        <taxon>Lactobacillaceae</taxon>
        <taxon>Lactobacillus</taxon>
    </lineage>
</organism>
<evidence type="ECO:0000255" key="1">
    <source>
        <dbReference type="HAMAP-Rule" id="MF_01343"/>
    </source>
</evidence>
<evidence type="ECO:0000305" key="2"/>
<accession>Q042T2</accession>
<dbReference type="EMBL" id="CP000413">
    <property type="protein sequence ID" value="ABJ60540.1"/>
    <property type="molecule type" value="Genomic_DNA"/>
</dbReference>
<dbReference type="RefSeq" id="WP_003647135.1">
    <property type="nucleotide sequence ID" value="NZ_WBMG01000002.1"/>
</dbReference>
<dbReference type="SMR" id="Q042T2"/>
<dbReference type="GeneID" id="29640168"/>
<dbReference type="KEGG" id="lga:LGAS_1171"/>
<dbReference type="HOGENOM" id="CLU_148518_0_0_9"/>
<dbReference type="BioCyc" id="LGAS324831:G1G6Y-1167-MONOMER"/>
<dbReference type="Proteomes" id="UP000000664">
    <property type="component" value="Chromosome"/>
</dbReference>
<dbReference type="GO" id="GO:0022627">
    <property type="term" value="C:cytosolic small ribosomal subunit"/>
    <property type="evidence" value="ECO:0007669"/>
    <property type="project" value="TreeGrafter"/>
</dbReference>
<dbReference type="GO" id="GO:0019843">
    <property type="term" value="F:rRNA binding"/>
    <property type="evidence" value="ECO:0007669"/>
    <property type="project" value="UniProtKB-UniRule"/>
</dbReference>
<dbReference type="GO" id="GO:0003735">
    <property type="term" value="F:structural constituent of ribosome"/>
    <property type="evidence" value="ECO:0007669"/>
    <property type="project" value="InterPro"/>
</dbReference>
<dbReference type="GO" id="GO:0006412">
    <property type="term" value="P:translation"/>
    <property type="evidence" value="ECO:0007669"/>
    <property type="project" value="UniProtKB-UniRule"/>
</dbReference>
<dbReference type="CDD" id="cd00353">
    <property type="entry name" value="Ribosomal_S15p_S13e"/>
    <property type="match status" value="1"/>
</dbReference>
<dbReference type="FunFam" id="1.10.287.10:FF:000002">
    <property type="entry name" value="30S ribosomal protein S15"/>
    <property type="match status" value="1"/>
</dbReference>
<dbReference type="Gene3D" id="6.10.250.3130">
    <property type="match status" value="1"/>
</dbReference>
<dbReference type="Gene3D" id="1.10.287.10">
    <property type="entry name" value="S15/NS1, RNA-binding"/>
    <property type="match status" value="1"/>
</dbReference>
<dbReference type="HAMAP" id="MF_01343_B">
    <property type="entry name" value="Ribosomal_uS15_B"/>
    <property type="match status" value="1"/>
</dbReference>
<dbReference type="InterPro" id="IPR000589">
    <property type="entry name" value="Ribosomal_uS15"/>
</dbReference>
<dbReference type="InterPro" id="IPR005290">
    <property type="entry name" value="Ribosomal_uS15_bac-type"/>
</dbReference>
<dbReference type="InterPro" id="IPR009068">
    <property type="entry name" value="uS15_NS1_RNA-bd_sf"/>
</dbReference>
<dbReference type="NCBIfam" id="TIGR00952">
    <property type="entry name" value="S15_bact"/>
    <property type="match status" value="1"/>
</dbReference>
<dbReference type="PANTHER" id="PTHR23321">
    <property type="entry name" value="RIBOSOMAL PROTEIN S15, BACTERIAL AND ORGANELLAR"/>
    <property type="match status" value="1"/>
</dbReference>
<dbReference type="PANTHER" id="PTHR23321:SF26">
    <property type="entry name" value="SMALL RIBOSOMAL SUBUNIT PROTEIN US15M"/>
    <property type="match status" value="1"/>
</dbReference>
<dbReference type="Pfam" id="PF00312">
    <property type="entry name" value="Ribosomal_S15"/>
    <property type="match status" value="1"/>
</dbReference>
<dbReference type="SMART" id="SM01387">
    <property type="entry name" value="Ribosomal_S15"/>
    <property type="match status" value="1"/>
</dbReference>
<dbReference type="SUPFAM" id="SSF47060">
    <property type="entry name" value="S15/NS1 RNA-binding domain"/>
    <property type="match status" value="1"/>
</dbReference>
<dbReference type="PROSITE" id="PS00362">
    <property type="entry name" value="RIBOSOMAL_S15"/>
    <property type="match status" value="1"/>
</dbReference>
<proteinExistence type="inferred from homology"/>
<feature type="chain" id="PRO_1000054800" description="Small ribosomal subunit protein uS15">
    <location>
        <begin position="1"/>
        <end position="89"/>
    </location>
</feature>
<name>RS15_LACGA</name>
<sequence length="89" mass="10402">MAISKEKKDELIKEYARHDGDTGSPEVQIALLTSDINNLNAHLKANKQDHHSYVGLLKKIGHRRNLLRYLKNKDIQRYRDLINKLGLRR</sequence>